<comment type="catalytic activity">
    <reaction evidence="1">
        <text>1-(2-carboxyphenylamino)-1-deoxy-D-ribulose 5-phosphate + H(+) = (1S,2R)-1-C-(indol-3-yl)glycerol 3-phosphate + CO2 + H2O</text>
        <dbReference type="Rhea" id="RHEA:23476"/>
        <dbReference type="ChEBI" id="CHEBI:15377"/>
        <dbReference type="ChEBI" id="CHEBI:15378"/>
        <dbReference type="ChEBI" id="CHEBI:16526"/>
        <dbReference type="ChEBI" id="CHEBI:58613"/>
        <dbReference type="ChEBI" id="CHEBI:58866"/>
        <dbReference type="EC" id="4.1.1.48"/>
    </reaction>
</comment>
<comment type="pathway">
    <text evidence="1">Amino-acid biosynthesis; L-tryptophan biosynthesis; L-tryptophan from chorismate: step 4/5.</text>
</comment>
<comment type="similarity">
    <text evidence="1">Belongs to the TrpC family.</text>
</comment>
<reference key="1">
    <citation type="journal article" date="2000" name="Nucleic Acids Res.">
        <title>Complete genome sequence of the alkaliphilic bacterium Bacillus halodurans and genomic sequence comparison with Bacillus subtilis.</title>
        <authorList>
            <person name="Takami H."/>
            <person name="Nakasone K."/>
            <person name="Takaki Y."/>
            <person name="Maeno G."/>
            <person name="Sasaki R."/>
            <person name="Masui N."/>
            <person name="Fuji F."/>
            <person name="Hirama C."/>
            <person name="Nakamura Y."/>
            <person name="Ogasawara N."/>
            <person name="Kuhara S."/>
            <person name="Horikoshi K."/>
        </authorList>
    </citation>
    <scope>NUCLEOTIDE SEQUENCE [LARGE SCALE GENOMIC DNA]</scope>
    <source>
        <strain>ATCC BAA-125 / DSM 18197 / FERM 7344 / JCM 9153 / C-125</strain>
    </source>
</reference>
<gene>
    <name evidence="1" type="primary">trpC</name>
    <name type="ordered locus">BH1661</name>
</gene>
<keyword id="KW-0028">Amino-acid biosynthesis</keyword>
<keyword id="KW-0057">Aromatic amino acid biosynthesis</keyword>
<keyword id="KW-0210">Decarboxylase</keyword>
<keyword id="KW-0456">Lyase</keyword>
<keyword id="KW-1185">Reference proteome</keyword>
<keyword id="KW-0822">Tryptophan biosynthesis</keyword>
<accession>Q9KCB2</accession>
<evidence type="ECO:0000255" key="1">
    <source>
        <dbReference type="HAMAP-Rule" id="MF_00134"/>
    </source>
</evidence>
<sequence length="257" mass="28435">MLDTILQTKREEIERLALPEQVEVKKVSLYDALRKPNRSLGLLAEVKKASPSKGLIRADFHPVEIGKSYEAAGADAISVLTDETYFQGHRDYLTKVKQAVNIPVLRKDFIIDRAQILESVRIGADAILLIVSTIPTTRLKELYDEAHELGLECLVEVHSEEEIAELFSAFTPTLIGVNNRNLKTFETDVAQTEKMAQVIPHGTMFLSESGLYTYDDLQRVKRAGATGVLVGESLMRASSPEEGIQHLFGGEPVATDA</sequence>
<dbReference type="EC" id="4.1.1.48" evidence="1"/>
<dbReference type="EMBL" id="BA000004">
    <property type="protein sequence ID" value="BAB05380.1"/>
    <property type="molecule type" value="Genomic_DNA"/>
</dbReference>
<dbReference type="PIR" id="E83857">
    <property type="entry name" value="E83857"/>
</dbReference>
<dbReference type="RefSeq" id="WP_010897823.1">
    <property type="nucleotide sequence ID" value="NC_002570.2"/>
</dbReference>
<dbReference type="SMR" id="Q9KCB2"/>
<dbReference type="STRING" id="272558.gene:10727559"/>
<dbReference type="KEGG" id="bha:BH1661"/>
<dbReference type="eggNOG" id="COG0134">
    <property type="taxonomic scope" value="Bacteria"/>
</dbReference>
<dbReference type="HOGENOM" id="CLU_034247_2_0_9"/>
<dbReference type="OrthoDB" id="9804217at2"/>
<dbReference type="UniPathway" id="UPA00035">
    <property type="reaction ID" value="UER00043"/>
</dbReference>
<dbReference type="Proteomes" id="UP000001258">
    <property type="component" value="Chromosome"/>
</dbReference>
<dbReference type="GO" id="GO:0004425">
    <property type="term" value="F:indole-3-glycerol-phosphate synthase activity"/>
    <property type="evidence" value="ECO:0007669"/>
    <property type="project" value="UniProtKB-UniRule"/>
</dbReference>
<dbReference type="GO" id="GO:0004640">
    <property type="term" value="F:phosphoribosylanthranilate isomerase activity"/>
    <property type="evidence" value="ECO:0007669"/>
    <property type="project" value="TreeGrafter"/>
</dbReference>
<dbReference type="GO" id="GO:0000162">
    <property type="term" value="P:L-tryptophan biosynthetic process"/>
    <property type="evidence" value="ECO:0007669"/>
    <property type="project" value="UniProtKB-UniRule"/>
</dbReference>
<dbReference type="CDD" id="cd00331">
    <property type="entry name" value="IGPS"/>
    <property type="match status" value="1"/>
</dbReference>
<dbReference type="FunFam" id="3.20.20.70:FF:000024">
    <property type="entry name" value="Indole-3-glycerol phosphate synthase"/>
    <property type="match status" value="1"/>
</dbReference>
<dbReference type="Gene3D" id="3.20.20.70">
    <property type="entry name" value="Aldolase class I"/>
    <property type="match status" value="1"/>
</dbReference>
<dbReference type="HAMAP" id="MF_00134_B">
    <property type="entry name" value="IGPS_B"/>
    <property type="match status" value="1"/>
</dbReference>
<dbReference type="InterPro" id="IPR013785">
    <property type="entry name" value="Aldolase_TIM"/>
</dbReference>
<dbReference type="InterPro" id="IPR045186">
    <property type="entry name" value="Indole-3-glycerol_P_synth"/>
</dbReference>
<dbReference type="InterPro" id="IPR013798">
    <property type="entry name" value="Indole-3-glycerol_P_synth_dom"/>
</dbReference>
<dbReference type="InterPro" id="IPR001468">
    <property type="entry name" value="Indole-3-GlycerolPSynthase_CS"/>
</dbReference>
<dbReference type="InterPro" id="IPR011060">
    <property type="entry name" value="RibuloseP-bd_barrel"/>
</dbReference>
<dbReference type="NCBIfam" id="NF001375">
    <property type="entry name" value="PRK00278.2-2"/>
    <property type="match status" value="1"/>
</dbReference>
<dbReference type="NCBIfam" id="NF001377">
    <property type="entry name" value="PRK00278.2-4"/>
    <property type="match status" value="1"/>
</dbReference>
<dbReference type="PANTHER" id="PTHR22854:SF2">
    <property type="entry name" value="INDOLE-3-GLYCEROL-PHOSPHATE SYNTHASE"/>
    <property type="match status" value="1"/>
</dbReference>
<dbReference type="PANTHER" id="PTHR22854">
    <property type="entry name" value="TRYPTOPHAN BIOSYNTHESIS PROTEIN"/>
    <property type="match status" value="1"/>
</dbReference>
<dbReference type="Pfam" id="PF00218">
    <property type="entry name" value="IGPS"/>
    <property type="match status" value="1"/>
</dbReference>
<dbReference type="SUPFAM" id="SSF51366">
    <property type="entry name" value="Ribulose-phoshate binding barrel"/>
    <property type="match status" value="1"/>
</dbReference>
<dbReference type="PROSITE" id="PS00614">
    <property type="entry name" value="IGPS"/>
    <property type="match status" value="1"/>
</dbReference>
<protein>
    <recommendedName>
        <fullName evidence="1">Indole-3-glycerol phosphate synthase</fullName>
        <shortName evidence="1">IGPS</shortName>
        <ecNumber evidence="1">4.1.1.48</ecNumber>
    </recommendedName>
</protein>
<proteinExistence type="inferred from homology"/>
<name>TRPC_HALH5</name>
<organism>
    <name type="scientific">Halalkalibacterium halodurans (strain ATCC BAA-125 / DSM 18197 / FERM 7344 / JCM 9153 / C-125)</name>
    <name type="common">Bacillus halodurans</name>
    <dbReference type="NCBI Taxonomy" id="272558"/>
    <lineage>
        <taxon>Bacteria</taxon>
        <taxon>Bacillati</taxon>
        <taxon>Bacillota</taxon>
        <taxon>Bacilli</taxon>
        <taxon>Bacillales</taxon>
        <taxon>Bacillaceae</taxon>
        <taxon>Halalkalibacterium (ex Joshi et al. 2022)</taxon>
    </lineage>
</organism>
<feature type="chain" id="PRO_0000154210" description="Indole-3-glycerol phosphate synthase">
    <location>
        <begin position="1"/>
        <end position="257"/>
    </location>
</feature>